<feature type="chain" id="PRO_1000097832" description="5-methyltetrahydropteroyltriglutamate--homocysteine methyltransferase">
    <location>
        <begin position="1"/>
        <end position="757"/>
    </location>
</feature>
<feature type="active site" description="Proton donor" evidence="1">
    <location>
        <position position="697"/>
    </location>
</feature>
<feature type="binding site" evidence="1">
    <location>
        <begin position="17"/>
        <end position="20"/>
    </location>
    <ligand>
        <name>5-methyltetrahydropteroyltri-L-glutamate</name>
        <dbReference type="ChEBI" id="CHEBI:58207"/>
    </ligand>
</feature>
<feature type="binding site" evidence="1">
    <location>
        <position position="117"/>
    </location>
    <ligand>
        <name>5-methyltetrahydropteroyltri-L-glutamate</name>
        <dbReference type="ChEBI" id="CHEBI:58207"/>
    </ligand>
</feature>
<feature type="binding site" evidence="1">
    <location>
        <begin position="434"/>
        <end position="436"/>
    </location>
    <ligand>
        <name>L-homocysteine</name>
        <dbReference type="ChEBI" id="CHEBI:58199"/>
    </ligand>
</feature>
<feature type="binding site" evidence="1">
    <location>
        <begin position="434"/>
        <end position="436"/>
    </location>
    <ligand>
        <name>L-methionine</name>
        <dbReference type="ChEBI" id="CHEBI:57844"/>
    </ligand>
</feature>
<feature type="binding site" evidence="1">
    <location>
        <position position="487"/>
    </location>
    <ligand>
        <name>L-homocysteine</name>
        <dbReference type="ChEBI" id="CHEBI:58199"/>
    </ligand>
</feature>
<feature type="binding site" evidence="1">
    <location>
        <position position="487"/>
    </location>
    <ligand>
        <name>L-methionine</name>
        <dbReference type="ChEBI" id="CHEBI:57844"/>
    </ligand>
</feature>
<feature type="binding site" evidence="1">
    <location>
        <begin position="518"/>
        <end position="519"/>
    </location>
    <ligand>
        <name>5-methyltetrahydropteroyltri-L-glutamate</name>
        <dbReference type="ChEBI" id="CHEBI:58207"/>
    </ligand>
</feature>
<feature type="binding site" evidence="1">
    <location>
        <position position="564"/>
    </location>
    <ligand>
        <name>5-methyltetrahydropteroyltri-L-glutamate</name>
        <dbReference type="ChEBI" id="CHEBI:58207"/>
    </ligand>
</feature>
<feature type="binding site" evidence="1">
    <location>
        <position position="602"/>
    </location>
    <ligand>
        <name>L-homocysteine</name>
        <dbReference type="ChEBI" id="CHEBI:58199"/>
    </ligand>
</feature>
<feature type="binding site" evidence="1">
    <location>
        <position position="602"/>
    </location>
    <ligand>
        <name>L-methionine</name>
        <dbReference type="ChEBI" id="CHEBI:57844"/>
    </ligand>
</feature>
<feature type="binding site" evidence="1">
    <location>
        <position position="608"/>
    </location>
    <ligand>
        <name>5-methyltetrahydropteroyltri-L-glutamate</name>
        <dbReference type="ChEBI" id="CHEBI:58207"/>
    </ligand>
</feature>
<feature type="binding site" evidence="1">
    <location>
        <position position="644"/>
    </location>
    <ligand>
        <name>Zn(2+)</name>
        <dbReference type="ChEBI" id="CHEBI:29105"/>
        <note>catalytic</note>
    </ligand>
</feature>
<feature type="binding site" evidence="1">
    <location>
        <position position="646"/>
    </location>
    <ligand>
        <name>Zn(2+)</name>
        <dbReference type="ChEBI" id="CHEBI:29105"/>
        <note>catalytic</note>
    </ligand>
</feature>
<feature type="binding site" evidence="1">
    <location>
        <position position="668"/>
    </location>
    <ligand>
        <name>Zn(2+)</name>
        <dbReference type="ChEBI" id="CHEBI:29105"/>
        <note>catalytic</note>
    </ligand>
</feature>
<feature type="binding site" evidence="1">
    <location>
        <position position="729"/>
    </location>
    <ligand>
        <name>Zn(2+)</name>
        <dbReference type="ChEBI" id="CHEBI:29105"/>
        <note>catalytic</note>
    </ligand>
</feature>
<keyword id="KW-0028">Amino-acid biosynthesis</keyword>
<keyword id="KW-0479">Metal-binding</keyword>
<keyword id="KW-0486">Methionine biosynthesis</keyword>
<keyword id="KW-0489">Methyltransferase</keyword>
<keyword id="KW-1185">Reference proteome</keyword>
<keyword id="KW-0677">Repeat</keyword>
<keyword id="KW-0808">Transferase</keyword>
<keyword id="KW-0862">Zinc</keyword>
<reference key="1">
    <citation type="journal article" date="2008" name="J. Bacteriol.">
        <title>Complete genome sequence of uropathogenic Proteus mirabilis, a master of both adherence and motility.</title>
        <authorList>
            <person name="Pearson M.M."/>
            <person name="Sebaihia M."/>
            <person name="Churcher C."/>
            <person name="Quail M.A."/>
            <person name="Seshasayee A.S."/>
            <person name="Luscombe N.M."/>
            <person name="Abdellah Z."/>
            <person name="Arrosmith C."/>
            <person name="Atkin B."/>
            <person name="Chillingworth T."/>
            <person name="Hauser H."/>
            <person name="Jagels K."/>
            <person name="Moule S."/>
            <person name="Mungall K."/>
            <person name="Norbertczak H."/>
            <person name="Rabbinowitsch E."/>
            <person name="Walker D."/>
            <person name="Whithead S."/>
            <person name="Thomson N.R."/>
            <person name="Rather P.N."/>
            <person name="Parkhill J."/>
            <person name="Mobley H.L.T."/>
        </authorList>
    </citation>
    <scope>NUCLEOTIDE SEQUENCE [LARGE SCALE GENOMIC DNA]</scope>
    <source>
        <strain>HI4320</strain>
    </source>
</reference>
<protein>
    <recommendedName>
        <fullName evidence="1">5-methyltetrahydropteroyltriglutamate--homocysteine methyltransferase</fullName>
        <ecNumber evidence="1">2.1.1.14</ecNumber>
    </recommendedName>
    <alternativeName>
        <fullName evidence="1">Cobalamin-independent methionine synthase</fullName>
    </alternativeName>
    <alternativeName>
        <fullName evidence="1">Methionine synthase, vitamin-B12 independent isozyme</fullName>
    </alternativeName>
</protein>
<evidence type="ECO:0000255" key="1">
    <source>
        <dbReference type="HAMAP-Rule" id="MF_00172"/>
    </source>
</evidence>
<accession>B4EWC2</accession>
<dbReference type="EC" id="2.1.1.14" evidence="1"/>
<dbReference type="EMBL" id="AM942759">
    <property type="protein sequence ID" value="CAR46910.1"/>
    <property type="molecule type" value="Genomic_DNA"/>
</dbReference>
<dbReference type="RefSeq" id="WP_012368787.1">
    <property type="nucleotide sequence ID" value="NC_010554.1"/>
</dbReference>
<dbReference type="SMR" id="B4EWC2"/>
<dbReference type="EnsemblBacteria" id="CAR46910">
    <property type="protein sequence ID" value="CAR46910"/>
    <property type="gene ID" value="PMI3529"/>
</dbReference>
<dbReference type="GeneID" id="6800124"/>
<dbReference type="KEGG" id="pmr:PMI3529"/>
<dbReference type="PATRIC" id="fig|529507.6.peg.3449"/>
<dbReference type="eggNOG" id="COG0620">
    <property type="taxonomic scope" value="Bacteria"/>
</dbReference>
<dbReference type="HOGENOM" id="CLU_013175_0_0_6"/>
<dbReference type="UniPathway" id="UPA00051">
    <property type="reaction ID" value="UER00082"/>
</dbReference>
<dbReference type="Proteomes" id="UP000008319">
    <property type="component" value="Chromosome"/>
</dbReference>
<dbReference type="GO" id="GO:0003871">
    <property type="term" value="F:5-methyltetrahydropteroyltriglutamate-homocysteine S-methyltransferase activity"/>
    <property type="evidence" value="ECO:0007669"/>
    <property type="project" value="UniProtKB-UniRule"/>
</dbReference>
<dbReference type="GO" id="GO:0008270">
    <property type="term" value="F:zinc ion binding"/>
    <property type="evidence" value="ECO:0007669"/>
    <property type="project" value="InterPro"/>
</dbReference>
<dbReference type="GO" id="GO:0009086">
    <property type="term" value="P:methionine biosynthetic process"/>
    <property type="evidence" value="ECO:0007669"/>
    <property type="project" value="UniProtKB-UniRule"/>
</dbReference>
<dbReference type="GO" id="GO:0032259">
    <property type="term" value="P:methylation"/>
    <property type="evidence" value="ECO:0007669"/>
    <property type="project" value="UniProtKB-KW"/>
</dbReference>
<dbReference type="CDD" id="cd03311">
    <property type="entry name" value="CIMS_C_terminal_like"/>
    <property type="match status" value="1"/>
</dbReference>
<dbReference type="CDD" id="cd03312">
    <property type="entry name" value="CIMS_N_terminal_like"/>
    <property type="match status" value="1"/>
</dbReference>
<dbReference type="FunFam" id="3.20.20.210:FF:000002">
    <property type="entry name" value="5-methyltetrahydropteroyltriglutamate--homocysteine methyltransferase"/>
    <property type="match status" value="1"/>
</dbReference>
<dbReference type="FunFam" id="3.20.20.210:FF:000003">
    <property type="entry name" value="5-methyltetrahydropteroyltriglutamate--homocysteine methyltransferase"/>
    <property type="match status" value="1"/>
</dbReference>
<dbReference type="Gene3D" id="3.20.20.210">
    <property type="match status" value="2"/>
</dbReference>
<dbReference type="HAMAP" id="MF_00172">
    <property type="entry name" value="Meth_synth"/>
    <property type="match status" value="1"/>
</dbReference>
<dbReference type="InterPro" id="IPR013215">
    <property type="entry name" value="Cbl-indep_Met_Synth_N"/>
</dbReference>
<dbReference type="InterPro" id="IPR006276">
    <property type="entry name" value="Cobalamin-indep_Met_synthase"/>
</dbReference>
<dbReference type="InterPro" id="IPR002629">
    <property type="entry name" value="Met_Synth_C/arc"/>
</dbReference>
<dbReference type="InterPro" id="IPR038071">
    <property type="entry name" value="UROD/MetE-like_sf"/>
</dbReference>
<dbReference type="NCBIfam" id="TIGR01371">
    <property type="entry name" value="met_syn_B12ind"/>
    <property type="match status" value="1"/>
</dbReference>
<dbReference type="NCBIfam" id="NF003556">
    <property type="entry name" value="PRK05222.1"/>
    <property type="match status" value="1"/>
</dbReference>
<dbReference type="PANTHER" id="PTHR30519">
    <property type="entry name" value="5-METHYLTETRAHYDROPTEROYLTRIGLUTAMATE--HOMOCYSTEINE METHYLTRANSFERASE"/>
    <property type="match status" value="1"/>
</dbReference>
<dbReference type="Pfam" id="PF08267">
    <property type="entry name" value="Meth_synt_1"/>
    <property type="match status" value="1"/>
</dbReference>
<dbReference type="Pfam" id="PF01717">
    <property type="entry name" value="Meth_synt_2"/>
    <property type="match status" value="1"/>
</dbReference>
<dbReference type="PIRSF" id="PIRSF000382">
    <property type="entry name" value="MeTrfase_B12_ind"/>
    <property type="match status" value="1"/>
</dbReference>
<dbReference type="SUPFAM" id="SSF51726">
    <property type="entry name" value="UROD/MetE-like"/>
    <property type="match status" value="2"/>
</dbReference>
<proteinExistence type="inferred from homology"/>
<gene>
    <name evidence="1" type="primary">metE</name>
    <name type="ordered locus">PMI3529</name>
</gene>
<organism>
    <name type="scientific">Proteus mirabilis (strain HI4320)</name>
    <dbReference type="NCBI Taxonomy" id="529507"/>
    <lineage>
        <taxon>Bacteria</taxon>
        <taxon>Pseudomonadati</taxon>
        <taxon>Pseudomonadota</taxon>
        <taxon>Gammaproteobacteria</taxon>
        <taxon>Enterobacterales</taxon>
        <taxon>Morganellaceae</taxon>
        <taxon>Proteus</taxon>
    </lineage>
</organism>
<name>METE_PROMH</name>
<comment type="function">
    <text evidence="1">Catalyzes the transfer of a methyl group from 5-methyltetrahydrofolate to homocysteine resulting in methionine formation.</text>
</comment>
<comment type="catalytic activity">
    <reaction evidence="1">
        <text>5-methyltetrahydropteroyltri-L-glutamate + L-homocysteine = tetrahydropteroyltri-L-glutamate + L-methionine</text>
        <dbReference type="Rhea" id="RHEA:21196"/>
        <dbReference type="ChEBI" id="CHEBI:57844"/>
        <dbReference type="ChEBI" id="CHEBI:58140"/>
        <dbReference type="ChEBI" id="CHEBI:58199"/>
        <dbReference type="ChEBI" id="CHEBI:58207"/>
        <dbReference type="EC" id="2.1.1.14"/>
    </reaction>
</comment>
<comment type="cofactor">
    <cofactor evidence="1">
        <name>Zn(2+)</name>
        <dbReference type="ChEBI" id="CHEBI:29105"/>
    </cofactor>
    <text evidence="1">Binds 1 zinc ion per subunit.</text>
</comment>
<comment type="pathway">
    <text evidence="1">Amino-acid biosynthesis; L-methionine biosynthesis via de novo pathway; L-methionine from L-homocysteine (MetE route): step 1/1.</text>
</comment>
<comment type="similarity">
    <text evidence="1">Belongs to the vitamin-B12 independent methionine synthase family.</text>
</comment>
<sequence length="757" mass="85412">MTIRNHTLGFPRIGLNRELKKAQESYWAGNISQAELLAVGKELRARHWQQQANAGVELLPVGDFAWYDQVLGTSLLLGNIPPRHRNEDGRLDLDTLFRVARGRAPTGKPAAASEMTKWFNTNYHYIVPEFQQGQSFTLAWQQLLDEVDEALALGHNVKPVLLGPITYLWLGKVKGPEFDRLSLLDAILPVYQQVLSQLQQKGIEWVQIDEPALVLDLPIEWQNAYQVAYQALTGQVKLLLTTYFDGITHHLDIIKNLPVNGLHIDLCAGQDALQVIHQALPKDWVLSLGVINGRNVWKADLTTRYQQVVALKGKRPLWIGTSCSLLHSPIDLSAETKLDDEVKSWFAFAVQKCAEVALLAKALNAPEGEYDEQLAQYSAPIRQREHSSRVHNAKVAARLQAINAQDGERTSPYQQRAKVQRARFNFPLWPTTTIGSFPQTTEIRTVRLDFKKGRIDTTAYRTNISEHIKQAIDEQERLGLDVLVHGEAERNDMVEYFGEHFEGYVFTQNGWVQSYGSRCVKPPVIIGDISRPAPITVDWATYAQSLTDKPVKGMLTGPVTILCWSFPREDVSRETIAKQIALALRDEVDDLQKAGIGIIQIDEPALREGLPLRRDEWQAYLDWAVDAFKLSAAIADDETQIHTHMCYCEFNDIMEAIAALDADVITIETSRSDMELLEAFEHFDYPNEIGPGVYDIHSPNVPNVEWIVGLLRKAQSRIPAERLWVNPDCGLKTRGWSETRAALANMVEAAKYLRQNV</sequence>